<dbReference type="EC" id="1.14.12.17" evidence="1"/>
<dbReference type="EMBL" id="BX640428">
    <property type="protein sequence ID" value="CAE36938.1"/>
    <property type="molecule type" value="Genomic_DNA"/>
</dbReference>
<dbReference type="SMR" id="Q7TTP2"/>
<dbReference type="KEGG" id="bpa:BPP1637"/>
<dbReference type="HOGENOM" id="CLU_003827_12_0_4"/>
<dbReference type="Proteomes" id="UP000001421">
    <property type="component" value="Chromosome"/>
</dbReference>
<dbReference type="GO" id="GO:0071949">
    <property type="term" value="F:FAD binding"/>
    <property type="evidence" value="ECO:0007669"/>
    <property type="project" value="InterPro"/>
</dbReference>
<dbReference type="GO" id="GO:0020037">
    <property type="term" value="F:heme binding"/>
    <property type="evidence" value="ECO:0007669"/>
    <property type="project" value="InterPro"/>
</dbReference>
<dbReference type="GO" id="GO:0046872">
    <property type="term" value="F:metal ion binding"/>
    <property type="evidence" value="ECO:0007669"/>
    <property type="project" value="UniProtKB-KW"/>
</dbReference>
<dbReference type="GO" id="GO:0008941">
    <property type="term" value="F:nitric oxide dioxygenase NAD(P)H activity"/>
    <property type="evidence" value="ECO:0007669"/>
    <property type="project" value="UniProtKB-UniRule"/>
</dbReference>
<dbReference type="GO" id="GO:0019825">
    <property type="term" value="F:oxygen binding"/>
    <property type="evidence" value="ECO:0007669"/>
    <property type="project" value="InterPro"/>
</dbReference>
<dbReference type="GO" id="GO:0005344">
    <property type="term" value="F:oxygen carrier activity"/>
    <property type="evidence" value="ECO:0007669"/>
    <property type="project" value="UniProtKB-UniRule"/>
</dbReference>
<dbReference type="GO" id="GO:0071500">
    <property type="term" value="P:cellular response to nitrosative stress"/>
    <property type="evidence" value="ECO:0007669"/>
    <property type="project" value="TreeGrafter"/>
</dbReference>
<dbReference type="GO" id="GO:0046210">
    <property type="term" value="P:nitric oxide catabolic process"/>
    <property type="evidence" value="ECO:0007669"/>
    <property type="project" value="TreeGrafter"/>
</dbReference>
<dbReference type="GO" id="GO:0009636">
    <property type="term" value="P:response to toxic substance"/>
    <property type="evidence" value="ECO:0007669"/>
    <property type="project" value="UniProtKB-KW"/>
</dbReference>
<dbReference type="CDD" id="cd06184">
    <property type="entry name" value="flavohem_like_fad_nad_binding"/>
    <property type="match status" value="1"/>
</dbReference>
<dbReference type="FunFam" id="1.10.490.10:FF:000003">
    <property type="entry name" value="Flavohemoprotein"/>
    <property type="match status" value="1"/>
</dbReference>
<dbReference type="FunFam" id="2.40.30.10:FF:000034">
    <property type="entry name" value="Flavohemoprotein"/>
    <property type="match status" value="1"/>
</dbReference>
<dbReference type="FunFam" id="3.40.50.80:FF:000010">
    <property type="entry name" value="Flavohemoprotein"/>
    <property type="match status" value="1"/>
</dbReference>
<dbReference type="Gene3D" id="1.10.490.10">
    <property type="entry name" value="Globins"/>
    <property type="match status" value="1"/>
</dbReference>
<dbReference type="Gene3D" id="3.40.50.80">
    <property type="entry name" value="Nucleotide-binding domain of ferredoxin-NADP reductase (FNR) module"/>
    <property type="match status" value="1"/>
</dbReference>
<dbReference type="Gene3D" id="2.40.30.10">
    <property type="entry name" value="Translation factors"/>
    <property type="match status" value="1"/>
</dbReference>
<dbReference type="HAMAP" id="MF_01252">
    <property type="entry name" value="Hmp"/>
    <property type="match status" value="1"/>
</dbReference>
<dbReference type="InterPro" id="IPR008333">
    <property type="entry name" value="Cbr1-like_FAD-bd_dom"/>
</dbReference>
<dbReference type="InterPro" id="IPR017927">
    <property type="entry name" value="FAD-bd_FR_type"/>
</dbReference>
<dbReference type="InterPro" id="IPR039261">
    <property type="entry name" value="FNR_nucleotide-bd"/>
</dbReference>
<dbReference type="InterPro" id="IPR000971">
    <property type="entry name" value="Globin"/>
</dbReference>
<dbReference type="InterPro" id="IPR009050">
    <property type="entry name" value="Globin-like_sf"/>
</dbReference>
<dbReference type="InterPro" id="IPR012292">
    <property type="entry name" value="Globin/Proto"/>
</dbReference>
<dbReference type="InterPro" id="IPR023950">
    <property type="entry name" value="Hmp"/>
</dbReference>
<dbReference type="InterPro" id="IPR001433">
    <property type="entry name" value="OxRdtase_FAD/NAD-bd"/>
</dbReference>
<dbReference type="InterPro" id="IPR017938">
    <property type="entry name" value="Riboflavin_synthase-like_b-brl"/>
</dbReference>
<dbReference type="NCBIfam" id="NF009805">
    <property type="entry name" value="PRK13289.1"/>
    <property type="match status" value="1"/>
</dbReference>
<dbReference type="PANTHER" id="PTHR43396">
    <property type="entry name" value="FLAVOHEMOPROTEIN"/>
    <property type="match status" value="1"/>
</dbReference>
<dbReference type="PANTHER" id="PTHR43396:SF3">
    <property type="entry name" value="FLAVOHEMOPROTEIN"/>
    <property type="match status" value="1"/>
</dbReference>
<dbReference type="Pfam" id="PF00970">
    <property type="entry name" value="FAD_binding_6"/>
    <property type="match status" value="1"/>
</dbReference>
<dbReference type="Pfam" id="PF00042">
    <property type="entry name" value="Globin"/>
    <property type="match status" value="1"/>
</dbReference>
<dbReference type="Pfam" id="PF00175">
    <property type="entry name" value="NAD_binding_1"/>
    <property type="match status" value="1"/>
</dbReference>
<dbReference type="PRINTS" id="PR00410">
    <property type="entry name" value="PHEHYDRXLASE"/>
</dbReference>
<dbReference type="SUPFAM" id="SSF52343">
    <property type="entry name" value="Ferredoxin reductase-like, C-terminal NADP-linked domain"/>
    <property type="match status" value="1"/>
</dbReference>
<dbReference type="SUPFAM" id="SSF46458">
    <property type="entry name" value="Globin-like"/>
    <property type="match status" value="1"/>
</dbReference>
<dbReference type="SUPFAM" id="SSF63380">
    <property type="entry name" value="Riboflavin synthase domain-like"/>
    <property type="match status" value="1"/>
</dbReference>
<dbReference type="PROSITE" id="PS51384">
    <property type="entry name" value="FAD_FR"/>
    <property type="match status" value="1"/>
</dbReference>
<dbReference type="PROSITE" id="PS01033">
    <property type="entry name" value="GLOBIN"/>
    <property type="match status" value="1"/>
</dbReference>
<evidence type="ECO:0000255" key="1">
    <source>
        <dbReference type="HAMAP-Rule" id="MF_01252"/>
    </source>
</evidence>
<evidence type="ECO:0000255" key="2">
    <source>
        <dbReference type="PROSITE-ProRule" id="PRU00238"/>
    </source>
</evidence>
<organism>
    <name type="scientific">Bordetella parapertussis (strain 12822 / ATCC BAA-587 / NCTC 13253)</name>
    <dbReference type="NCBI Taxonomy" id="257311"/>
    <lineage>
        <taxon>Bacteria</taxon>
        <taxon>Pseudomonadati</taxon>
        <taxon>Pseudomonadota</taxon>
        <taxon>Betaproteobacteria</taxon>
        <taxon>Burkholderiales</taxon>
        <taxon>Alcaligenaceae</taxon>
        <taxon>Bordetella</taxon>
    </lineage>
</organism>
<comment type="function">
    <text evidence="1">Is involved in NO detoxification in an aerobic process, termed nitric oxide dioxygenase (NOD) reaction that utilizes O(2) and NAD(P)H to convert NO to nitrate, which protects the bacterium from various noxious nitrogen compounds. Therefore, plays a central role in the inducible response to nitrosative stress.</text>
</comment>
<comment type="catalytic activity">
    <reaction evidence="1">
        <text>2 nitric oxide + NADPH + 2 O2 = 2 nitrate + NADP(+) + H(+)</text>
        <dbReference type="Rhea" id="RHEA:19465"/>
        <dbReference type="ChEBI" id="CHEBI:15378"/>
        <dbReference type="ChEBI" id="CHEBI:15379"/>
        <dbReference type="ChEBI" id="CHEBI:16480"/>
        <dbReference type="ChEBI" id="CHEBI:17632"/>
        <dbReference type="ChEBI" id="CHEBI:57783"/>
        <dbReference type="ChEBI" id="CHEBI:58349"/>
        <dbReference type="EC" id="1.14.12.17"/>
    </reaction>
</comment>
<comment type="catalytic activity">
    <reaction evidence="1">
        <text>2 nitric oxide + NADH + 2 O2 = 2 nitrate + NAD(+) + H(+)</text>
        <dbReference type="Rhea" id="RHEA:19469"/>
        <dbReference type="ChEBI" id="CHEBI:15378"/>
        <dbReference type="ChEBI" id="CHEBI:15379"/>
        <dbReference type="ChEBI" id="CHEBI:16480"/>
        <dbReference type="ChEBI" id="CHEBI:17632"/>
        <dbReference type="ChEBI" id="CHEBI:57540"/>
        <dbReference type="ChEBI" id="CHEBI:57945"/>
        <dbReference type="EC" id="1.14.12.17"/>
    </reaction>
</comment>
<comment type="cofactor">
    <cofactor evidence="1">
        <name>heme b</name>
        <dbReference type="ChEBI" id="CHEBI:60344"/>
    </cofactor>
    <text evidence="1">Binds 1 heme b (iron(II)-protoporphyrin IX) group per subunit.</text>
</comment>
<comment type="cofactor">
    <cofactor evidence="1">
        <name>FAD</name>
        <dbReference type="ChEBI" id="CHEBI:57692"/>
    </cofactor>
    <text evidence="1">Binds 1 FAD per subunit.</text>
</comment>
<comment type="domain">
    <text>Consists of two distinct domains; an N-terminal heme-containing oxygen-binding domain and a C-terminal reductase domain with binding sites for FAD and NAD(P)H.</text>
</comment>
<comment type="similarity">
    <text evidence="1">Belongs to the globin family. Two-domain flavohemoproteins subfamily.</text>
</comment>
<comment type="similarity">
    <text evidence="1">In the C-terminal section; belongs to the flavoprotein pyridine nucleotide cytochrome reductase family.</text>
</comment>
<accession>Q7TTP2</accession>
<protein>
    <recommendedName>
        <fullName evidence="1">Flavohemoprotein</fullName>
    </recommendedName>
    <alternativeName>
        <fullName evidence="1">Flavohemoglobin</fullName>
    </alternativeName>
    <alternativeName>
        <fullName evidence="1">Hemoglobin-like protein</fullName>
    </alternativeName>
    <alternativeName>
        <fullName evidence="1">Nitric oxide dioxygenase</fullName>
        <shortName evidence="1">NO oxygenase</shortName>
        <shortName evidence="1">NOD</shortName>
        <ecNumber evidence="1">1.14.12.17</ecNumber>
    </alternativeName>
</protein>
<sequence>MLSPEVRALVKATAPVLKEHGEALTRHFYTRMLGGNPELRQLFNQGHQQSGQQQQALAAAVAAYAEHIDDPSVLLPVVERIAHKHVSLGVRAEHYAIVGKHLLASIREVLGEAATDELIDAWAAAYGQLADLLIGRERALYAAAASRDGGWTGWRAFKVVRKTPESAEITSFYLAPADGGATPDYLPGQYVSVRVYVPELGLMQPRQYSLSEAPGMPGQLRISVKREAGSPAGMVSGTLHNRINEGDVLDVSPPQGDFTLDAEDGRPVVLLSGGVGLTPMVSMLNHLTARDDGRQIRFVHACREAGVHAMKEHINALAAKRPNVRKAVFYERVGADDRRGVDYDYEGRVDLHAIRDEVILPDADYYLCGPLPFMQAQRRALADLGVAEHRIHAEVFGTGGVA</sequence>
<reference key="1">
    <citation type="journal article" date="2003" name="Nat. Genet.">
        <title>Comparative analysis of the genome sequences of Bordetella pertussis, Bordetella parapertussis and Bordetella bronchiseptica.</title>
        <authorList>
            <person name="Parkhill J."/>
            <person name="Sebaihia M."/>
            <person name="Preston A."/>
            <person name="Murphy L.D."/>
            <person name="Thomson N.R."/>
            <person name="Harris D.E."/>
            <person name="Holden M.T.G."/>
            <person name="Churcher C.M."/>
            <person name="Bentley S.D."/>
            <person name="Mungall K.L."/>
            <person name="Cerdeno-Tarraga A.-M."/>
            <person name="Temple L."/>
            <person name="James K.D."/>
            <person name="Harris B."/>
            <person name="Quail M.A."/>
            <person name="Achtman M."/>
            <person name="Atkin R."/>
            <person name="Baker S."/>
            <person name="Basham D."/>
            <person name="Bason N."/>
            <person name="Cherevach I."/>
            <person name="Chillingworth T."/>
            <person name="Collins M."/>
            <person name="Cronin A."/>
            <person name="Davis P."/>
            <person name="Doggett J."/>
            <person name="Feltwell T."/>
            <person name="Goble A."/>
            <person name="Hamlin N."/>
            <person name="Hauser H."/>
            <person name="Holroyd S."/>
            <person name="Jagels K."/>
            <person name="Leather S."/>
            <person name="Moule S."/>
            <person name="Norberczak H."/>
            <person name="O'Neil S."/>
            <person name="Ormond D."/>
            <person name="Price C."/>
            <person name="Rabbinowitsch E."/>
            <person name="Rutter S."/>
            <person name="Sanders M."/>
            <person name="Saunders D."/>
            <person name="Seeger K."/>
            <person name="Sharp S."/>
            <person name="Simmonds M."/>
            <person name="Skelton J."/>
            <person name="Squares R."/>
            <person name="Squares S."/>
            <person name="Stevens K."/>
            <person name="Unwin L."/>
            <person name="Whitehead S."/>
            <person name="Barrell B.G."/>
            <person name="Maskell D.J."/>
        </authorList>
    </citation>
    <scope>NUCLEOTIDE SEQUENCE [LARGE SCALE GENOMIC DNA]</scope>
    <source>
        <strain>12822 / ATCC BAA-587 / NCTC 13253</strain>
    </source>
</reference>
<feature type="chain" id="PRO_0000052426" description="Flavohemoprotein">
    <location>
        <begin position="1"/>
        <end position="402"/>
    </location>
</feature>
<feature type="domain" description="Globin" evidence="2">
    <location>
        <begin position="1"/>
        <end position="138"/>
    </location>
</feature>
<feature type="domain" description="FAD-binding FR-type" evidence="1">
    <location>
        <begin position="152"/>
        <end position="261"/>
    </location>
</feature>
<feature type="region of interest" description="Reductase">
    <location>
        <begin position="149"/>
        <end position="402"/>
    </location>
</feature>
<feature type="active site" description="Charge relay system" evidence="1">
    <location>
        <position position="95"/>
    </location>
</feature>
<feature type="active site" description="Charge relay system" evidence="1">
    <location>
        <position position="137"/>
    </location>
</feature>
<feature type="binding site" description="proximal binding residue" evidence="1">
    <location>
        <position position="85"/>
    </location>
    <ligand>
        <name>heme b</name>
        <dbReference type="ChEBI" id="CHEBI:60344"/>
    </ligand>
    <ligandPart>
        <name>Fe</name>
        <dbReference type="ChEBI" id="CHEBI:18248"/>
    </ligandPart>
</feature>
<feature type="binding site" evidence="1">
    <location>
        <position position="190"/>
    </location>
    <ligand>
        <name>FAD</name>
        <dbReference type="ChEBI" id="CHEBI:57692"/>
    </ligand>
</feature>
<feature type="binding site" evidence="1">
    <location>
        <begin position="206"/>
        <end position="209"/>
    </location>
    <ligand>
        <name>FAD</name>
        <dbReference type="ChEBI" id="CHEBI:57692"/>
    </ligand>
</feature>
<feature type="binding site" evidence="1">
    <location>
        <begin position="274"/>
        <end position="279"/>
    </location>
    <ligand>
        <name>NADP(+)</name>
        <dbReference type="ChEBI" id="CHEBI:58349"/>
    </ligand>
</feature>
<feature type="binding site" evidence="1">
    <location>
        <begin position="395"/>
        <end position="398"/>
    </location>
    <ligand>
        <name>FAD</name>
        <dbReference type="ChEBI" id="CHEBI:57692"/>
    </ligand>
</feature>
<feature type="site" description="Involved in heme-bound ligand stabilization and O-O bond activation" evidence="1">
    <location>
        <position position="29"/>
    </location>
</feature>
<feature type="site" description="Influences the redox potential of the prosthetic heme and FAD groups" evidence="1">
    <location>
        <position position="84"/>
    </location>
</feature>
<feature type="site" description="Influences the redox potential of the prosthetic heme and FAD groups" evidence="1">
    <location>
        <position position="394"/>
    </location>
</feature>
<proteinExistence type="inferred from homology"/>
<name>HMP_BORPA</name>
<gene>
    <name evidence="1" type="primary">hmp</name>
    <name type="synonym">fhp</name>
    <name type="ordered locus">BPP1637</name>
</gene>
<keyword id="KW-0216">Detoxification</keyword>
<keyword id="KW-0274">FAD</keyword>
<keyword id="KW-0285">Flavoprotein</keyword>
<keyword id="KW-0349">Heme</keyword>
<keyword id="KW-0408">Iron</keyword>
<keyword id="KW-0479">Metal-binding</keyword>
<keyword id="KW-0520">NAD</keyword>
<keyword id="KW-0521">NADP</keyword>
<keyword id="KW-0560">Oxidoreductase</keyword>
<keyword id="KW-0561">Oxygen transport</keyword>
<keyword id="KW-0813">Transport</keyword>